<protein>
    <recommendedName>
        <fullName evidence="1">Adenine phosphoribosyltransferase</fullName>
        <shortName evidence="1">APRT</shortName>
        <ecNumber evidence="1">2.4.2.7</ecNumber>
    </recommendedName>
</protein>
<organism>
    <name type="scientific">Dinoroseobacter shibae (strain DSM 16493 / NCIMB 14021 / DFL 12)</name>
    <dbReference type="NCBI Taxonomy" id="398580"/>
    <lineage>
        <taxon>Bacteria</taxon>
        <taxon>Pseudomonadati</taxon>
        <taxon>Pseudomonadota</taxon>
        <taxon>Alphaproteobacteria</taxon>
        <taxon>Rhodobacterales</taxon>
        <taxon>Roseobacteraceae</taxon>
        <taxon>Dinoroseobacter</taxon>
    </lineage>
</organism>
<name>APT_DINSH</name>
<sequence length="179" mass="19546">MTPRKTLRDYIRTIPDFPHEGIMFRDVTTLFADPRGFRIAVDQLLDPFVDVKIDKVAGLEARGFILGGAVAHQLSVGFVPIRKKGKLPGKTIAQDYVLEYGKATVEIHDDAFQPGERVLLVDDLLATGGTARAGIQLIERLGAEVVGCAFLIDLPDLGGRKLLEEMDMGVHALTSFDGD</sequence>
<gene>
    <name evidence="1" type="primary">apt</name>
    <name type="ordered locus">Dshi_2074</name>
</gene>
<keyword id="KW-0963">Cytoplasm</keyword>
<keyword id="KW-0328">Glycosyltransferase</keyword>
<keyword id="KW-0660">Purine salvage</keyword>
<keyword id="KW-1185">Reference proteome</keyword>
<keyword id="KW-0808">Transferase</keyword>
<proteinExistence type="inferred from homology"/>
<accession>A8LPV7</accession>
<dbReference type="EC" id="2.4.2.7" evidence="1"/>
<dbReference type="EMBL" id="CP000830">
    <property type="protein sequence ID" value="ABV93811.1"/>
    <property type="molecule type" value="Genomic_DNA"/>
</dbReference>
<dbReference type="RefSeq" id="WP_012178744.1">
    <property type="nucleotide sequence ID" value="NC_009952.1"/>
</dbReference>
<dbReference type="SMR" id="A8LPV7"/>
<dbReference type="STRING" id="398580.Dshi_2074"/>
<dbReference type="KEGG" id="dsh:Dshi_2074"/>
<dbReference type="eggNOG" id="COG0503">
    <property type="taxonomic scope" value="Bacteria"/>
</dbReference>
<dbReference type="HOGENOM" id="CLU_063339_3_0_5"/>
<dbReference type="OrthoDB" id="9803963at2"/>
<dbReference type="UniPathway" id="UPA00588">
    <property type="reaction ID" value="UER00646"/>
</dbReference>
<dbReference type="Proteomes" id="UP000006833">
    <property type="component" value="Chromosome"/>
</dbReference>
<dbReference type="GO" id="GO:0005737">
    <property type="term" value="C:cytoplasm"/>
    <property type="evidence" value="ECO:0007669"/>
    <property type="project" value="UniProtKB-SubCell"/>
</dbReference>
<dbReference type="GO" id="GO:0002055">
    <property type="term" value="F:adenine binding"/>
    <property type="evidence" value="ECO:0007669"/>
    <property type="project" value="TreeGrafter"/>
</dbReference>
<dbReference type="GO" id="GO:0003999">
    <property type="term" value="F:adenine phosphoribosyltransferase activity"/>
    <property type="evidence" value="ECO:0007669"/>
    <property type="project" value="UniProtKB-UniRule"/>
</dbReference>
<dbReference type="GO" id="GO:0016208">
    <property type="term" value="F:AMP binding"/>
    <property type="evidence" value="ECO:0007669"/>
    <property type="project" value="TreeGrafter"/>
</dbReference>
<dbReference type="GO" id="GO:0006168">
    <property type="term" value="P:adenine salvage"/>
    <property type="evidence" value="ECO:0007669"/>
    <property type="project" value="InterPro"/>
</dbReference>
<dbReference type="GO" id="GO:0044209">
    <property type="term" value="P:AMP salvage"/>
    <property type="evidence" value="ECO:0007669"/>
    <property type="project" value="UniProtKB-UniRule"/>
</dbReference>
<dbReference type="GO" id="GO:0006166">
    <property type="term" value="P:purine ribonucleoside salvage"/>
    <property type="evidence" value="ECO:0007669"/>
    <property type="project" value="UniProtKB-KW"/>
</dbReference>
<dbReference type="CDD" id="cd06223">
    <property type="entry name" value="PRTases_typeI"/>
    <property type="match status" value="1"/>
</dbReference>
<dbReference type="FunFam" id="3.40.50.2020:FF:000021">
    <property type="entry name" value="Adenine phosphoribosyltransferase"/>
    <property type="match status" value="1"/>
</dbReference>
<dbReference type="Gene3D" id="3.40.50.2020">
    <property type="match status" value="1"/>
</dbReference>
<dbReference type="HAMAP" id="MF_00004">
    <property type="entry name" value="Aden_phosphoribosyltr"/>
    <property type="match status" value="1"/>
</dbReference>
<dbReference type="InterPro" id="IPR005764">
    <property type="entry name" value="Ade_phspho_trans"/>
</dbReference>
<dbReference type="InterPro" id="IPR000836">
    <property type="entry name" value="PRibTrfase_dom"/>
</dbReference>
<dbReference type="InterPro" id="IPR029057">
    <property type="entry name" value="PRTase-like"/>
</dbReference>
<dbReference type="InterPro" id="IPR050054">
    <property type="entry name" value="UPRTase/APRTase"/>
</dbReference>
<dbReference type="NCBIfam" id="TIGR01090">
    <property type="entry name" value="apt"/>
    <property type="match status" value="1"/>
</dbReference>
<dbReference type="NCBIfam" id="NF002634">
    <property type="entry name" value="PRK02304.1-3"/>
    <property type="match status" value="1"/>
</dbReference>
<dbReference type="NCBIfam" id="NF002636">
    <property type="entry name" value="PRK02304.1-5"/>
    <property type="match status" value="1"/>
</dbReference>
<dbReference type="PANTHER" id="PTHR32315">
    <property type="entry name" value="ADENINE PHOSPHORIBOSYLTRANSFERASE"/>
    <property type="match status" value="1"/>
</dbReference>
<dbReference type="PANTHER" id="PTHR32315:SF3">
    <property type="entry name" value="ADENINE PHOSPHORIBOSYLTRANSFERASE"/>
    <property type="match status" value="1"/>
</dbReference>
<dbReference type="Pfam" id="PF00156">
    <property type="entry name" value="Pribosyltran"/>
    <property type="match status" value="1"/>
</dbReference>
<dbReference type="SUPFAM" id="SSF53271">
    <property type="entry name" value="PRTase-like"/>
    <property type="match status" value="1"/>
</dbReference>
<dbReference type="PROSITE" id="PS00103">
    <property type="entry name" value="PUR_PYR_PR_TRANSFER"/>
    <property type="match status" value="1"/>
</dbReference>
<feature type="chain" id="PRO_0000329345" description="Adenine phosphoribosyltransferase">
    <location>
        <begin position="1"/>
        <end position="179"/>
    </location>
</feature>
<evidence type="ECO:0000255" key="1">
    <source>
        <dbReference type="HAMAP-Rule" id="MF_00004"/>
    </source>
</evidence>
<comment type="function">
    <text evidence="1">Catalyzes a salvage reaction resulting in the formation of AMP, that is energically less costly than de novo synthesis.</text>
</comment>
<comment type="catalytic activity">
    <reaction evidence="1">
        <text>AMP + diphosphate = 5-phospho-alpha-D-ribose 1-diphosphate + adenine</text>
        <dbReference type="Rhea" id="RHEA:16609"/>
        <dbReference type="ChEBI" id="CHEBI:16708"/>
        <dbReference type="ChEBI" id="CHEBI:33019"/>
        <dbReference type="ChEBI" id="CHEBI:58017"/>
        <dbReference type="ChEBI" id="CHEBI:456215"/>
        <dbReference type="EC" id="2.4.2.7"/>
    </reaction>
</comment>
<comment type="pathway">
    <text evidence="1">Purine metabolism; AMP biosynthesis via salvage pathway; AMP from adenine: step 1/1.</text>
</comment>
<comment type="subunit">
    <text evidence="1">Homodimer.</text>
</comment>
<comment type="subcellular location">
    <subcellularLocation>
        <location evidence="1">Cytoplasm</location>
    </subcellularLocation>
</comment>
<comment type="similarity">
    <text evidence="1">Belongs to the purine/pyrimidine phosphoribosyltransferase family.</text>
</comment>
<reference key="1">
    <citation type="journal article" date="2010" name="ISME J.">
        <title>The complete genome sequence of the algal symbiont Dinoroseobacter shibae: a hitchhiker's guide to life in the sea.</title>
        <authorList>
            <person name="Wagner-Dobler I."/>
            <person name="Ballhausen B."/>
            <person name="Berger M."/>
            <person name="Brinkhoff T."/>
            <person name="Buchholz I."/>
            <person name="Bunk B."/>
            <person name="Cypionka H."/>
            <person name="Daniel R."/>
            <person name="Drepper T."/>
            <person name="Gerdts G."/>
            <person name="Hahnke S."/>
            <person name="Han C."/>
            <person name="Jahn D."/>
            <person name="Kalhoefer D."/>
            <person name="Kiss H."/>
            <person name="Klenk H.P."/>
            <person name="Kyrpides N."/>
            <person name="Liebl W."/>
            <person name="Liesegang H."/>
            <person name="Meincke L."/>
            <person name="Pati A."/>
            <person name="Petersen J."/>
            <person name="Piekarski T."/>
            <person name="Pommerenke C."/>
            <person name="Pradella S."/>
            <person name="Pukall R."/>
            <person name="Rabus R."/>
            <person name="Stackebrandt E."/>
            <person name="Thole S."/>
            <person name="Thompson L."/>
            <person name="Tielen P."/>
            <person name="Tomasch J."/>
            <person name="von Jan M."/>
            <person name="Wanphrut N."/>
            <person name="Wichels A."/>
            <person name="Zech H."/>
            <person name="Simon M."/>
        </authorList>
    </citation>
    <scope>NUCLEOTIDE SEQUENCE [LARGE SCALE GENOMIC DNA]</scope>
    <source>
        <strain>DSM 16493 / NCIMB 14021 / DFL 12</strain>
    </source>
</reference>